<comment type="function">
    <text evidence="2">Involved in the methylaspartate cycle. Catalyzes the formation of the alpha,beta-unsaturated bond by the reversible anti elimination of ammonia from L-threo-beta-methylaspartate (L-threo-(2S,3S)-3-methylaspartate) to give mesaconate. It can also catalyze the amination of fumarate and ethylfumarate, and the deamination of hydroxylamine, hydrazine, methylamine and ethylamine.</text>
</comment>
<comment type="catalytic activity">
    <reaction evidence="2">
        <text>(2S,3S)-3-methyl-L-aspartate = mesaconate + NH4(+)</text>
        <dbReference type="Rhea" id="RHEA:12829"/>
        <dbReference type="ChEBI" id="CHEBI:28938"/>
        <dbReference type="ChEBI" id="CHEBI:36986"/>
        <dbReference type="ChEBI" id="CHEBI:58724"/>
        <dbReference type="EC" id="4.3.1.2"/>
    </reaction>
</comment>
<comment type="cofactor">
    <cofactor evidence="1">
        <name>Mg(2+)</name>
        <dbReference type="ChEBI" id="CHEBI:18420"/>
    </cofactor>
</comment>
<comment type="biophysicochemical properties">
    <kinetics>
        <KM evidence="2">0.6 mM for mesaconate (at pH 9 and 30 degrees Celsius)</KM>
        <KM evidence="2">4.6 mM for L-threo-beta-methylaspartate (at pH 9 and 30 degrees Celsius)</KM>
        <KM evidence="2">16 mM for L-threo-beta-methylaspartate (at pH 9 and 70 degrees Celsius)</KM>
        <text>kcat is 16 sec(-1) for aminase activity with mesaconate (at pH 9 and 30 degrees Celsius). kcat is 16 sec(-1) for deaminase activity with L-threo-beta-methylaspartate (at pH 9 and 30 degrees Celsius). kcat is 78 sec(-1) for deaminase activity with L-threo-beta-methylaspartate (at pH 9 and 70 degrees Celsius).</text>
    </kinetics>
    <phDependence>
        <text evidence="2">Optimum pH is 9.</text>
    </phDependence>
    <temperatureDependence>
        <text evidence="2">Optimum temperature is 70 degrees Celsius. It stays fully active upon incubation at 50 degrees Celsius. Even after 4 hours of incubation, the enzyme retains more than 95% of its initial activity.</text>
    </temperatureDependence>
</comment>
<comment type="pathway">
    <text>Amino-acid degradation; L-glutamate degradation via mesaconate pathway; acetate and pyruvate from L-glutamate: step 2/4.</text>
</comment>
<comment type="subunit">
    <text evidence="2">Homodimer.</text>
</comment>
<comment type="mass spectrometry" mass="49291.0" method="Electrospray" evidence="2"/>
<comment type="similarity">
    <text evidence="3">Belongs to the methylaspartate ammonia-lyase family.</text>
</comment>
<evidence type="ECO:0000250" key="1"/>
<evidence type="ECO:0000269" key="2">
    <source>
    </source>
</evidence>
<evidence type="ECO:0000305" key="3"/>
<feature type="chain" id="PRO_0000429365" description="Methylaspartate ammonia-lyase 1">
    <location>
        <begin position="1"/>
        <end position="420"/>
    </location>
</feature>
<feature type="active site" description="Proton acceptor" evidence="1">
    <location>
        <position position="330"/>
    </location>
</feature>
<feature type="binding site" evidence="1">
    <location>
        <position position="173"/>
    </location>
    <ligand>
        <name>(2S,3S)-3-methyl-L-aspartate</name>
        <dbReference type="ChEBI" id="CHEBI:58724"/>
    </ligand>
</feature>
<feature type="binding site" evidence="1">
    <location>
        <position position="237"/>
    </location>
    <ligand>
        <name>Mg(2+)</name>
        <dbReference type="ChEBI" id="CHEBI:18420"/>
    </ligand>
</feature>
<feature type="binding site" evidence="1">
    <location>
        <position position="272"/>
    </location>
    <ligand>
        <name>Mg(2+)</name>
        <dbReference type="ChEBI" id="CHEBI:18420"/>
    </ligand>
</feature>
<feature type="binding site" evidence="1">
    <location>
        <position position="306"/>
    </location>
    <ligand>
        <name>Mg(2+)</name>
        <dbReference type="ChEBI" id="CHEBI:18420"/>
    </ligand>
</feature>
<feature type="binding site" evidence="1">
    <location>
        <position position="328"/>
    </location>
    <ligand>
        <name>(2S,3S)-3-methyl-L-aspartate</name>
        <dbReference type="ChEBI" id="CHEBI:58724"/>
    </ligand>
</feature>
<feature type="binding site" evidence="1">
    <location>
        <begin position="359"/>
        <end position="360"/>
    </location>
    <ligand>
        <name>(2S,3S)-3-methyl-L-aspartate</name>
        <dbReference type="ChEBI" id="CHEBI:58724"/>
    </ligand>
</feature>
<feature type="site" description="Transition state stabilizer" evidence="1">
    <location>
        <position position="195"/>
    </location>
</feature>
<dbReference type="EC" id="4.3.1.2"/>
<dbReference type="EMBL" id="CP000141">
    <property type="protein sequence ID" value="ABB16231.1"/>
    <property type="molecule type" value="Genomic_DNA"/>
</dbReference>
<dbReference type="RefSeq" id="WP_011343418.1">
    <property type="nucleotide sequence ID" value="NC_007503.1"/>
</dbReference>
<dbReference type="SMR" id="Q3AEU2"/>
<dbReference type="STRING" id="246194.CHY_0484"/>
<dbReference type="KEGG" id="chy:CHY_0484"/>
<dbReference type="eggNOG" id="COG3799">
    <property type="taxonomic scope" value="Bacteria"/>
</dbReference>
<dbReference type="HOGENOM" id="CLU_055277_0_0_9"/>
<dbReference type="InParanoid" id="Q3AEU2"/>
<dbReference type="OrthoDB" id="8630262at2"/>
<dbReference type="BRENDA" id="4.3.1.2">
    <property type="organism ID" value="1178"/>
</dbReference>
<dbReference type="UniPathway" id="UPA00561">
    <property type="reaction ID" value="UER00618"/>
</dbReference>
<dbReference type="Proteomes" id="UP000002706">
    <property type="component" value="Chromosome"/>
</dbReference>
<dbReference type="GO" id="GO:0046872">
    <property type="term" value="F:metal ion binding"/>
    <property type="evidence" value="ECO:0007669"/>
    <property type="project" value="UniProtKB-KW"/>
</dbReference>
<dbReference type="GO" id="GO:0050096">
    <property type="term" value="F:methylaspartate ammonia-lyase activity"/>
    <property type="evidence" value="ECO:0007669"/>
    <property type="project" value="UniProtKB-EC"/>
</dbReference>
<dbReference type="GO" id="GO:0019553">
    <property type="term" value="P:glutamate catabolic process via L-citramalate"/>
    <property type="evidence" value="ECO:0007669"/>
    <property type="project" value="UniProtKB-UniPathway"/>
</dbReference>
<dbReference type="CDD" id="cd03314">
    <property type="entry name" value="MAL"/>
    <property type="match status" value="1"/>
</dbReference>
<dbReference type="Gene3D" id="3.20.20.120">
    <property type="entry name" value="Enolase-like C-terminal domain"/>
    <property type="match status" value="1"/>
</dbReference>
<dbReference type="Gene3D" id="3.30.390.10">
    <property type="entry name" value="Enolase-like, N-terminal domain"/>
    <property type="match status" value="1"/>
</dbReference>
<dbReference type="InterPro" id="IPR036849">
    <property type="entry name" value="Enolase-like_C_sf"/>
</dbReference>
<dbReference type="InterPro" id="IPR029017">
    <property type="entry name" value="Enolase-like_N"/>
</dbReference>
<dbReference type="InterPro" id="IPR006395">
    <property type="entry name" value="Me_Asp_am_lyase"/>
</dbReference>
<dbReference type="InterPro" id="IPR022662">
    <property type="entry name" value="MeAsp_NH4-lyase_C"/>
</dbReference>
<dbReference type="InterPro" id="IPR022665">
    <property type="entry name" value="MeAsp_NH4-lyase_N"/>
</dbReference>
<dbReference type="NCBIfam" id="TIGR01502">
    <property type="entry name" value="B_methylAsp_ase"/>
    <property type="match status" value="1"/>
</dbReference>
<dbReference type="PANTHER" id="PTHR48073:SF2">
    <property type="entry name" value="O-SUCCINYLBENZOATE SYNTHASE"/>
    <property type="match status" value="1"/>
</dbReference>
<dbReference type="PANTHER" id="PTHR48073">
    <property type="entry name" value="O-SUCCINYLBENZOATE SYNTHASE-RELATED"/>
    <property type="match status" value="1"/>
</dbReference>
<dbReference type="Pfam" id="PF07476">
    <property type="entry name" value="MAAL_C"/>
    <property type="match status" value="1"/>
</dbReference>
<dbReference type="Pfam" id="PF05034">
    <property type="entry name" value="MAAL_N"/>
    <property type="match status" value="1"/>
</dbReference>
<dbReference type="PIRSF" id="PIRSF017107">
    <property type="entry name" value="MAL"/>
    <property type="match status" value="1"/>
</dbReference>
<dbReference type="SFLD" id="SFLDF00007">
    <property type="entry name" value="methylaspartate_ammonia-lyase"/>
    <property type="match status" value="1"/>
</dbReference>
<dbReference type="SFLD" id="SFLDG00151">
    <property type="entry name" value="methylaspartate_ammonia-lyase"/>
    <property type="match status" value="1"/>
</dbReference>
<dbReference type="SUPFAM" id="SSF51604">
    <property type="entry name" value="Enolase C-terminal domain-like"/>
    <property type="match status" value="1"/>
</dbReference>
<dbReference type="SUPFAM" id="SSF54826">
    <property type="entry name" value="Enolase N-terminal domain-like"/>
    <property type="match status" value="1"/>
</dbReference>
<organism>
    <name type="scientific">Carboxydothermus hydrogenoformans (strain ATCC BAA-161 / DSM 6008 / Z-2901)</name>
    <dbReference type="NCBI Taxonomy" id="246194"/>
    <lineage>
        <taxon>Bacteria</taxon>
        <taxon>Bacillati</taxon>
        <taxon>Bacillota</taxon>
        <taxon>Clostridia</taxon>
        <taxon>Thermoanaerobacterales</taxon>
        <taxon>Thermoanaerobacteraceae</taxon>
        <taxon>Carboxydothermus</taxon>
    </lineage>
</organism>
<proteinExistence type="evidence at protein level"/>
<sequence length="420" mass="46398">MRIKDVLFVKGSSGFYFDDQKAIKSGAVTDGFTYKGKPLTPGFSRVRQGGEAVSIMLFLENGEIAVGDCVAVQYSGVDGRDPVFLADNFIEVLEEEIKPRLVGYNLVRFREAARYFTNLTDKRGKRYHTALRYGLTQALLDAVAKINRTTMAEVIAEEYGLDLTLNPVPLFAQSGDDRYINADKMILKRVDVLPHGLFNHPAKTGEEGKNLTEYALWLKQRIKTLGDHDYLPVFHFDVYGTLGTVFNDNLDRIADYLARLEEKVAPHPLQIEGPVDLGSKERQIEGLKYLQEKLITLGSKVIIVADEWCNNLSDIKEFVDAGAGGMVQIKSPDLGGVNDIIEAVLYAKEKGTGAYLGGSCNETDVSAKITVHVGLATGPAQLLVKPGMGVDEGLTIMRNEMMRTLAILQRNKVTFQKKVG</sequence>
<keyword id="KW-0456">Lyase</keyword>
<keyword id="KW-0460">Magnesium</keyword>
<keyword id="KW-0479">Metal-binding</keyword>
<keyword id="KW-1185">Reference proteome</keyword>
<accession>Q3AEU2</accession>
<gene>
    <name type="ordered locus">CHY_0484</name>
</gene>
<protein>
    <recommendedName>
        <fullName>Methylaspartate ammonia-lyase 1</fullName>
        <shortName>MAL</shortName>
        <ecNumber>4.3.1.2</ecNumber>
    </recommendedName>
    <alternativeName>
        <fullName>3-methylaspartate ammonia-lyase 1</fullName>
    </alternativeName>
    <alternativeName>
        <fullName>Beta-methylaspartase 1</fullName>
    </alternativeName>
</protein>
<reference key="1">
    <citation type="journal article" date="2005" name="PLoS Genet.">
        <title>Life in hot carbon monoxide: the complete genome sequence of Carboxydothermus hydrogenoformans Z-2901.</title>
        <authorList>
            <person name="Wu M."/>
            <person name="Ren Q."/>
            <person name="Durkin A.S."/>
            <person name="Daugherty S.C."/>
            <person name="Brinkac L.M."/>
            <person name="Dodson R.J."/>
            <person name="Madupu R."/>
            <person name="Sullivan S.A."/>
            <person name="Kolonay J.F."/>
            <person name="Nelson W.C."/>
            <person name="Tallon L.J."/>
            <person name="Jones K.M."/>
            <person name="Ulrich L.E."/>
            <person name="Gonzalez J.M."/>
            <person name="Zhulin I.B."/>
            <person name="Robb F.T."/>
            <person name="Eisen J.A."/>
        </authorList>
    </citation>
    <scope>NUCLEOTIDE SEQUENCE [LARGE SCALE GENOMIC DNA]</scope>
    <source>
        <strain>ATCC BAA-161 / DSM 6008 / Z-2901</strain>
    </source>
</reference>
<reference key="2">
    <citation type="journal article" date="2012" name="Appl. Microbiol. Biotechnol.">
        <title>Characterization of a thermostable methylaspartate ammonia lyase from Carboxydothermus hydrogenoformans.</title>
        <authorList>
            <person name="Raj H."/>
            <person name="Puthan Veetil V."/>
            <person name="Szymanski W."/>
            <person name="Dekker F.J."/>
            <person name="Quax W.J."/>
            <person name="Feringa B.L."/>
            <person name="Janssen D.B."/>
            <person name="Poelarends G.J."/>
        </authorList>
    </citation>
    <scope>FUNCTION</scope>
    <scope>CATALYTIC ACTIVITY</scope>
    <scope>BIOPHYSICOCHEMICAL PROPERTIES</scope>
    <scope>MASS SPECTROMETRY</scope>
    <scope>SUBSTRATE SPECIFICITY</scope>
    <scope>SUBUNIT</scope>
    <source>
        <strain>ATCC BAA-161 / DSM 6008 / Z-2901</strain>
    </source>
</reference>
<name>MAAL1_CARHZ</name>